<keyword id="KW-1003">Cell membrane</keyword>
<keyword id="KW-0325">Glycoprotein</keyword>
<keyword id="KW-0472">Membrane</keyword>
<keyword id="KW-0597">Phosphoprotein</keyword>
<keyword id="KW-1185">Reference proteome</keyword>
<keyword id="KW-0762">Sugar transport</keyword>
<keyword id="KW-0812">Transmembrane</keyword>
<keyword id="KW-1133">Transmembrane helix</keyword>
<keyword id="KW-0813">Transport</keyword>
<accession>O62786</accession>
<accession>I3LNT8</accession>
<dbReference type="EMBL" id="DQIR01026554">
    <property type="protein sequence ID" value="HCZ82029.1"/>
    <property type="molecule type" value="mRNA"/>
</dbReference>
<dbReference type="EMBL" id="AEMK02000089">
    <property type="status" value="NOT_ANNOTATED_CDS"/>
    <property type="molecule type" value="Genomic_DNA"/>
</dbReference>
<dbReference type="EMBL" id="AF054835">
    <property type="protein sequence ID" value="AAC12737.1"/>
    <property type="molecule type" value="mRNA"/>
</dbReference>
<dbReference type="SMR" id="O62786"/>
<dbReference type="FunCoup" id="O62786">
    <property type="interactions" value="81"/>
</dbReference>
<dbReference type="STRING" id="9823.ENSSSCP00000060505"/>
<dbReference type="GlyCosmos" id="O62786">
    <property type="glycosylation" value="1 site, No reported glycans"/>
</dbReference>
<dbReference type="GlyGen" id="O62786">
    <property type="glycosylation" value="2 sites"/>
</dbReference>
<dbReference type="PaxDb" id="9823-ENSSSCP00000025763"/>
<dbReference type="Ensembl" id="ENSSSCT00015007461.1">
    <property type="protein sequence ID" value="ENSSSCP00015002985.1"/>
    <property type="gene ID" value="ENSSSCG00015005572.1"/>
</dbReference>
<dbReference type="Ensembl" id="ENSSSCT00030014685.1">
    <property type="protein sequence ID" value="ENSSSCP00030006595.1"/>
    <property type="gene ID" value="ENSSSCG00030010642.1"/>
</dbReference>
<dbReference type="Ensembl" id="ENSSSCT00040074016.1">
    <property type="protein sequence ID" value="ENSSSCP00040031727.1"/>
    <property type="gene ID" value="ENSSSCG00040054435.1"/>
</dbReference>
<dbReference type="Ensembl" id="ENSSSCT00045028790.1">
    <property type="protein sequence ID" value="ENSSSCP00045019927.1"/>
    <property type="gene ID" value="ENSSSCG00045016833.1"/>
</dbReference>
<dbReference type="Ensembl" id="ENSSSCT00050037499.1">
    <property type="protein sequence ID" value="ENSSSCP00050015571.1"/>
    <property type="gene ID" value="ENSSSCG00050027864.1"/>
</dbReference>
<dbReference type="Ensembl" id="ENSSSCT00055033225.1">
    <property type="protein sequence ID" value="ENSSSCP00055026460.1"/>
    <property type="gene ID" value="ENSSSCG00055016698.1"/>
</dbReference>
<dbReference type="Ensembl" id="ENSSSCT00070046626.1">
    <property type="protein sequence ID" value="ENSSSCP00070039339.1"/>
    <property type="gene ID" value="ENSSSCG00070023372.1"/>
</dbReference>
<dbReference type="Ensembl" id="ENSSSCT00085047239">
    <property type="protein sequence ID" value="ENSSSCP00085032968"/>
    <property type="gene ID" value="ENSSSCG00085024631"/>
</dbReference>
<dbReference type="Ensembl" id="ENSSSCT00090048088">
    <property type="protein sequence ID" value="ENSSSCP00090029865"/>
    <property type="gene ID" value="ENSSSCG00090027186"/>
</dbReference>
<dbReference type="Ensembl" id="ENSSSCT00105021706">
    <property type="protein sequence ID" value="ENSSSCP00105015719"/>
    <property type="gene ID" value="ENSSSCG00105010855"/>
</dbReference>
<dbReference type="Ensembl" id="ENSSSCT00110001991">
    <property type="protein sequence ID" value="ENSSSCP00110001508"/>
    <property type="gene ID" value="ENSSSCG00110001023"/>
</dbReference>
<dbReference type="Ensembl" id="ENSSSCT00115024437">
    <property type="protein sequence ID" value="ENSSSCP00115023177"/>
    <property type="gene ID" value="ENSSSCG00115014012"/>
</dbReference>
<dbReference type="eggNOG" id="KOG0569">
    <property type="taxonomic scope" value="Eukaryota"/>
</dbReference>
<dbReference type="HOGENOM" id="CLU_001265_30_5_1"/>
<dbReference type="InParanoid" id="O62786"/>
<dbReference type="OMA" id="VMVVFAC"/>
<dbReference type="TreeFam" id="TF313762"/>
<dbReference type="Reactome" id="R-SSC-189200">
    <property type="pathway name" value="Cellular hexose transport"/>
</dbReference>
<dbReference type="Reactome" id="R-SSC-422356">
    <property type="pathway name" value="Regulation of insulin secretion"/>
</dbReference>
<dbReference type="Reactome" id="R-SSC-8981373">
    <property type="pathway name" value="Intestinal hexose absorption"/>
</dbReference>
<dbReference type="Proteomes" id="UP000008227">
    <property type="component" value="Unplaced"/>
</dbReference>
<dbReference type="Proteomes" id="UP000314985">
    <property type="component" value="Chromosome 13"/>
</dbReference>
<dbReference type="Proteomes" id="UP000694570">
    <property type="component" value="Unplaced"/>
</dbReference>
<dbReference type="Proteomes" id="UP000694571">
    <property type="component" value="Unplaced"/>
</dbReference>
<dbReference type="Proteomes" id="UP000694720">
    <property type="component" value="Unplaced"/>
</dbReference>
<dbReference type="Proteomes" id="UP000694722">
    <property type="component" value="Unplaced"/>
</dbReference>
<dbReference type="Proteomes" id="UP000694723">
    <property type="component" value="Unplaced"/>
</dbReference>
<dbReference type="Proteomes" id="UP000694724">
    <property type="component" value="Unplaced"/>
</dbReference>
<dbReference type="Proteomes" id="UP000694725">
    <property type="component" value="Unplaced"/>
</dbReference>
<dbReference type="Proteomes" id="UP000694726">
    <property type="component" value="Unplaced"/>
</dbReference>
<dbReference type="Proteomes" id="UP000694727">
    <property type="component" value="Unplaced"/>
</dbReference>
<dbReference type="Proteomes" id="UP000694728">
    <property type="component" value="Unplaced"/>
</dbReference>
<dbReference type="GO" id="GO:0005903">
    <property type="term" value="C:brush border"/>
    <property type="evidence" value="ECO:0000318"/>
    <property type="project" value="GO_Central"/>
</dbReference>
<dbReference type="GO" id="GO:0005886">
    <property type="term" value="C:plasma membrane"/>
    <property type="evidence" value="ECO:0000250"/>
    <property type="project" value="UniProtKB"/>
</dbReference>
<dbReference type="GO" id="GO:0055056">
    <property type="term" value="F:D-glucose transmembrane transporter activity"/>
    <property type="evidence" value="ECO:0000250"/>
    <property type="project" value="UniProtKB"/>
</dbReference>
<dbReference type="GO" id="GO:0033300">
    <property type="term" value="F:dehydroascorbic acid transmembrane transporter activity"/>
    <property type="evidence" value="ECO:0000250"/>
    <property type="project" value="UniProtKB"/>
</dbReference>
<dbReference type="GO" id="GO:0005353">
    <property type="term" value="F:fructose transmembrane transporter activity"/>
    <property type="evidence" value="ECO:0000250"/>
    <property type="project" value="UniProtKB"/>
</dbReference>
<dbReference type="GO" id="GO:0005354">
    <property type="term" value="F:galactose transmembrane transporter activity"/>
    <property type="evidence" value="ECO:0000250"/>
    <property type="project" value="UniProtKB"/>
</dbReference>
<dbReference type="GO" id="GO:0046323">
    <property type="term" value="P:D-glucose import"/>
    <property type="evidence" value="ECO:0000318"/>
    <property type="project" value="GO_Central"/>
</dbReference>
<dbReference type="GO" id="GO:1904659">
    <property type="term" value="P:D-glucose transmembrane transport"/>
    <property type="evidence" value="ECO:0000250"/>
    <property type="project" value="UniProtKB"/>
</dbReference>
<dbReference type="GO" id="GO:0070837">
    <property type="term" value="P:dehydroascorbic acid transport"/>
    <property type="evidence" value="ECO:0000318"/>
    <property type="project" value="GO_Central"/>
</dbReference>
<dbReference type="GO" id="GO:0015755">
    <property type="term" value="P:fructose transmembrane transport"/>
    <property type="evidence" value="ECO:0000250"/>
    <property type="project" value="UniProtKB"/>
</dbReference>
<dbReference type="GO" id="GO:0015757">
    <property type="term" value="P:galactose transmembrane transport"/>
    <property type="evidence" value="ECO:0000250"/>
    <property type="project" value="UniProtKB"/>
</dbReference>
<dbReference type="CDD" id="cd17431">
    <property type="entry name" value="MFS_GLUT_Class1"/>
    <property type="match status" value="1"/>
</dbReference>
<dbReference type="FunFam" id="1.20.1250.20:FF:000029">
    <property type="entry name" value="solute carrier family 2, facilitated glucose transporter member 4"/>
    <property type="match status" value="1"/>
</dbReference>
<dbReference type="Gene3D" id="1.20.1250.20">
    <property type="entry name" value="MFS general substrate transporter like domains"/>
    <property type="match status" value="1"/>
</dbReference>
<dbReference type="InterPro" id="IPR002440">
    <property type="entry name" value="Glc_transpt_2"/>
</dbReference>
<dbReference type="InterPro" id="IPR045263">
    <property type="entry name" value="GLUT"/>
</dbReference>
<dbReference type="InterPro" id="IPR020846">
    <property type="entry name" value="MFS_dom"/>
</dbReference>
<dbReference type="InterPro" id="IPR005828">
    <property type="entry name" value="MFS_sugar_transport-like"/>
</dbReference>
<dbReference type="InterPro" id="IPR036259">
    <property type="entry name" value="MFS_trans_sf"/>
</dbReference>
<dbReference type="InterPro" id="IPR003663">
    <property type="entry name" value="Sugar/inositol_transpt"/>
</dbReference>
<dbReference type="InterPro" id="IPR005829">
    <property type="entry name" value="Sugar_transporter_CS"/>
</dbReference>
<dbReference type="NCBIfam" id="TIGR00879">
    <property type="entry name" value="SP"/>
    <property type="match status" value="1"/>
</dbReference>
<dbReference type="PANTHER" id="PTHR23503">
    <property type="entry name" value="SOLUTE CARRIER FAMILY 2"/>
    <property type="match status" value="1"/>
</dbReference>
<dbReference type="PANTHER" id="PTHR23503:SF27">
    <property type="entry name" value="SOLUTE CARRIER FAMILY 2, FACILITATED GLUCOSE TRANSPORTER MEMBER 2"/>
    <property type="match status" value="1"/>
</dbReference>
<dbReference type="Pfam" id="PF00083">
    <property type="entry name" value="Sugar_tr"/>
    <property type="match status" value="1"/>
</dbReference>
<dbReference type="PRINTS" id="PR01191">
    <property type="entry name" value="GLUCTRSPORT2"/>
</dbReference>
<dbReference type="PRINTS" id="PR00171">
    <property type="entry name" value="SUGRTRNSPORT"/>
</dbReference>
<dbReference type="SUPFAM" id="SSF103473">
    <property type="entry name" value="MFS general substrate transporter"/>
    <property type="match status" value="1"/>
</dbReference>
<dbReference type="PROSITE" id="PS50850">
    <property type="entry name" value="MFS"/>
    <property type="match status" value="1"/>
</dbReference>
<dbReference type="PROSITE" id="PS00216">
    <property type="entry name" value="SUGAR_TRANSPORT_1"/>
    <property type="match status" value="1"/>
</dbReference>
<dbReference type="PROSITE" id="PS00217">
    <property type="entry name" value="SUGAR_TRANSPORT_2"/>
    <property type="match status" value="1"/>
</dbReference>
<proteinExistence type="evidence at transcript level"/>
<protein>
    <recommendedName>
        <fullName evidence="5">Solute carrier family 2, facilitated glucose transporter member 2</fullName>
    </recommendedName>
    <alternativeName>
        <fullName evidence="1">Glucose transporter type 2, liver</fullName>
        <shortName evidence="1">GLUT-2</shortName>
    </alternativeName>
</protein>
<comment type="function">
    <text evidence="1">Facilitative hexose transporter that mediates the transport of glucose, fructose and galactose. Likely mediates the bidirectional transfer of glucose across the plasma membrane of hepatocytes and is responsible for uptake of glucose by the beta cells; may comprise part of the glucose-sensing mechanism of the beta cell. May also participate with the Na(+)/glucose cotransporter in the transcellular transport of glucose in the small intestine and kidney. Also able to mediate the transport of dehydroascorbate.</text>
</comment>
<comment type="catalytic activity">
    <reaction evidence="1">
        <text>D-glucose(out) = D-glucose(in)</text>
        <dbReference type="Rhea" id="RHEA:60376"/>
        <dbReference type="ChEBI" id="CHEBI:4167"/>
    </reaction>
</comment>
<comment type="catalytic activity">
    <reaction evidence="1">
        <text>D-fructose(out) = D-fructose(in)</text>
        <dbReference type="Rhea" id="RHEA:60372"/>
        <dbReference type="ChEBI" id="CHEBI:37721"/>
    </reaction>
</comment>
<comment type="catalytic activity">
    <reaction evidence="1">
        <text>L-dehydroascorbate(out) = L-dehydroascorbate(in)</text>
        <dbReference type="Rhea" id="RHEA:60380"/>
        <dbReference type="ChEBI" id="CHEBI:58539"/>
    </reaction>
</comment>
<comment type="catalytic activity">
    <reaction evidence="1">
        <text>D-galactose(in) = D-galactose(out)</text>
        <dbReference type="Rhea" id="RHEA:34915"/>
        <dbReference type="ChEBI" id="CHEBI:4139"/>
    </reaction>
</comment>
<comment type="activity regulation">
    <text evidence="1">D-glucose and maltose competitively inhibit fructose transport. D-glucose, D-fructose and maltose inhibit deoxyglucose transport.</text>
</comment>
<comment type="subcellular location">
    <subcellularLocation>
        <location evidence="1">Cell membrane</location>
        <topology evidence="4">Multi-pass membrane protein</topology>
    </subcellularLocation>
</comment>
<comment type="PTM">
    <text evidence="3">N-glycosylated; required for stability and retention at the cell surface of pancreatic beta cells.</text>
</comment>
<comment type="similarity">
    <text evidence="5">Belongs to the major facilitator superfamily. Sugar transporter (TC 2.A.1.1) family. Glucose transporter subfamily.</text>
</comment>
<feature type="chain" id="PRO_0000050349" description="Solute carrier family 2, facilitated glucose transporter member 2">
    <location>
        <begin position="1"/>
        <end position="524"/>
    </location>
</feature>
<feature type="topological domain" description="Cytoplasmic" evidence="5">
    <location>
        <begin position="1"/>
        <end position="6"/>
    </location>
</feature>
<feature type="transmembrane region" description="Helical; Name=1" evidence="4">
    <location>
        <begin position="7"/>
        <end position="26"/>
    </location>
</feature>
<feature type="topological domain" description="Extracellular" evidence="5">
    <location>
        <begin position="27"/>
        <end position="89"/>
    </location>
</feature>
<feature type="transmembrane region" description="Helical; Name=2" evidence="4">
    <location>
        <begin position="90"/>
        <end position="115"/>
    </location>
</feature>
<feature type="topological domain" description="Cytoplasmic" evidence="5">
    <location>
        <begin position="116"/>
        <end position="126"/>
    </location>
</feature>
<feature type="transmembrane region" description="Helical; Name=3" evidence="4">
    <location>
        <begin position="127"/>
        <end position="145"/>
    </location>
</feature>
<feature type="topological domain" description="Extracellular" evidence="5">
    <location>
        <begin position="146"/>
        <end position="150"/>
    </location>
</feature>
<feature type="transmembrane region" description="Helical; Name=4" evidence="4">
    <location>
        <begin position="151"/>
        <end position="176"/>
    </location>
</feature>
<feature type="topological domain" description="Cytoplasmic" evidence="5">
    <location>
        <begin position="177"/>
        <end position="187"/>
    </location>
</feature>
<feature type="transmembrane region" description="Helical; Name=5" evidence="4">
    <location>
        <begin position="188"/>
        <end position="211"/>
    </location>
</feature>
<feature type="topological domain" description="Extracellular" evidence="5">
    <location>
        <begin position="212"/>
        <end position="216"/>
    </location>
</feature>
<feature type="transmembrane region" description="Helical; Name=6" evidence="4">
    <location>
        <begin position="217"/>
        <end position="239"/>
    </location>
</feature>
<feature type="topological domain" description="Cytoplasmic" evidence="5">
    <location>
        <begin position="240"/>
        <end position="303"/>
    </location>
</feature>
<feature type="transmembrane region" description="Helical; Name=7" evidence="4">
    <location>
        <begin position="304"/>
        <end position="327"/>
    </location>
</feature>
<feature type="topological domain" description="Extracellular" evidence="5">
    <location>
        <begin position="328"/>
        <end position="338"/>
    </location>
</feature>
<feature type="transmembrane region" description="Helical; Name=8" evidence="4">
    <location>
        <begin position="339"/>
        <end position="360"/>
    </location>
</feature>
<feature type="topological domain" description="Cytoplasmic" evidence="5">
    <location>
        <begin position="361"/>
        <end position="366"/>
    </location>
</feature>
<feature type="transmembrane region" description="Helical; Name=9" evidence="4">
    <location>
        <begin position="367"/>
        <end position="389"/>
    </location>
</feature>
<feature type="topological domain" description="Extracellular" evidence="5">
    <location>
        <begin position="390"/>
        <end position="394"/>
    </location>
</feature>
<feature type="transmembrane region" description="Helical; Name=10" evidence="4">
    <location>
        <begin position="395"/>
        <end position="413"/>
    </location>
</feature>
<feature type="topological domain" description="Cytoplasmic" evidence="5">
    <location>
        <begin position="414"/>
        <end position="433"/>
    </location>
</feature>
<feature type="transmembrane region" description="Helical; Name=11" evidence="4">
    <location>
        <begin position="434"/>
        <end position="458"/>
    </location>
</feature>
<feature type="topological domain" description="Extracellular" evidence="5">
    <location>
        <begin position="459"/>
        <end position="463"/>
    </location>
</feature>
<feature type="transmembrane region" description="Helical; Name=12" evidence="4">
    <location>
        <begin position="464"/>
        <end position="482"/>
    </location>
</feature>
<feature type="topological domain" description="Cytoplasmic" evidence="5">
    <location>
        <begin position="483"/>
        <end position="524"/>
    </location>
</feature>
<feature type="binding site" evidence="2">
    <location>
        <position position="193"/>
    </location>
    <ligand>
        <name>D-glucose</name>
        <dbReference type="ChEBI" id="CHEBI:4167"/>
    </ligand>
</feature>
<feature type="binding site" evidence="2">
    <location>
        <begin position="314"/>
        <end position="315"/>
    </location>
    <ligand>
        <name>D-glucose</name>
        <dbReference type="ChEBI" id="CHEBI:4167"/>
    </ligand>
</feature>
<feature type="binding site" evidence="2">
    <location>
        <position position="320"/>
    </location>
    <ligand>
        <name>D-glucose</name>
        <dbReference type="ChEBI" id="CHEBI:4167"/>
    </ligand>
</feature>
<feature type="binding site" evidence="2">
    <location>
        <position position="349"/>
    </location>
    <ligand>
        <name>D-glucose</name>
        <dbReference type="ChEBI" id="CHEBI:4167"/>
    </ligand>
</feature>
<feature type="binding site" evidence="2">
    <location>
        <position position="412"/>
    </location>
    <ligand>
        <name>D-glucose</name>
        <dbReference type="ChEBI" id="CHEBI:4167"/>
    </ligand>
</feature>
<feature type="binding site" evidence="2">
    <location>
        <position position="420"/>
    </location>
    <ligand>
        <name>D-glucose</name>
        <dbReference type="ChEBI" id="CHEBI:4167"/>
    </ligand>
</feature>
<feature type="modified residue" description="Phosphothreonine" evidence="1">
    <location>
        <position position="523"/>
    </location>
</feature>
<feature type="glycosylation site" description="N-linked (GlcNAc...) asparagine" evidence="4">
    <location>
        <position position="62"/>
    </location>
</feature>
<feature type="sequence conflict" description="In Ref. 3; AAC12737." evidence="5" ref="3">
    <original>C</original>
    <variation>R</variation>
    <location>
        <position position="446"/>
    </location>
</feature>
<sequence>MTEDKITGTLVFAVLTAVLGSFQFGYDIGVINAPQQVIITHYRHVLGVPLDDRKAINSYAINSTEELPTGPYPGDPTPTSWAEEETTASASLIIMLWSLSVSIFAIGGMIASFFGGMLGDRLGRIKAMLVANILSLVGALLMWFSKLGPSHILIISGRGISGLYCGLISGLVPMYIGEIAPTKFRGAIGALHQLAIVTGILVSQIIGLDFLLGNHELWHILLGLSAVPAVLQSLMLFFCPESPRYLYIKLDEEAKARKSLKKLRGSDDVTKDITEMRKEREEASSEKKVSIIQLFTNSSYRQPILVALMLHMAQQFSGINGIFYYSTSIFQTAGISQPVYATIGVGAINTIFTALSVFLVEKAGRRSLFLIGMSGMFVCAIFMSVGLVLLDKLPWMSYVSMTAIFLFVSFFEIGPGPIPWFMVAEFFSQGPRPAALAMAAFSNWTCNFIIALCFQYIADFCGPYVFFLFAGVVLVFTLFTFFKVPETKGKSFEEIAAEFQKKSGSAQSPKAAVEMEFLGATETV</sequence>
<name>GTR2_PIG</name>
<evidence type="ECO:0000250" key="1">
    <source>
        <dbReference type="UniProtKB" id="P11168"/>
    </source>
</evidence>
<evidence type="ECO:0000250" key="2">
    <source>
        <dbReference type="UniProtKB" id="P11169"/>
    </source>
</evidence>
<evidence type="ECO:0000250" key="3">
    <source>
        <dbReference type="UniProtKB" id="P14246"/>
    </source>
</evidence>
<evidence type="ECO:0000255" key="4"/>
<evidence type="ECO:0000305" key="5"/>
<organism>
    <name type="scientific">Sus scrofa</name>
    <name type="common">Pig</name>
    <dbReference type="NCBI Taxonomy" id="9823"/>
    <lineage>
        <taxon>Eukaryota</taxon>
        <taxon>Metazoa</taxon>
        <taxon>Chordata</taxon>
        <taxon>Craniata</taxon>
        <taxon>Vertebrata</taxon>
        <taxon>Euteleostomi</taxon>
        <taxon>Mammalia</taxon>
        <taxon>Eutheria</taxon>
        <taxon>Laurasiatheria</taxon>
        <taxon>Artiodactyla</taxon>
        <taxon>Suina</taxon>
        <taxon>Suidae</taxon>
        <taxon>Sus</taxon>
    </lineage>
</organism>
<gene>
    <name evidence="1" type="primary">SLC2A2</name>
    <name evidence="1" type="synonym">GLUT2</name>
</gene>
<reference key="1">
    <citation type="journal article" date="2019" name="PeerJ">
        <title>Genes of the pig, Sus scrofa, reconstructed with EvidentialGene.</title>
        <authorList>
            <person name="Gilbert D.G."/>
        </authorList>
    </citation>
    <scope>NUCLEOTIDE SEQUENCE [LARGE SCALE MRNA]</scope>
</reference>
<reference key="2">
    <citation type="submission" date="2009-11" db="EMBL/GenBank/DDBJ databases">
        <authorList>
            <consortium name="Porcine genome sequencing project"/>
        </authorList>
    </citation>
    <scope>NUCLEOTIDE SEQUENCE [LARGE SCALE GENOMIC DNA]</scope>
</reference>
<reference key="3">
    <citation type="submission" date="1998-03" db="EMBL/GenBank/DDBJ databases">
        <authorList>
            <person name="Canty J.M."/>
            <person name="Young R.F."/>
            <person name="Fallavollita J.A."/>
        </authorList>
    </citation>
    <scope>NUCLEOTIDE SEQUENCE [MRNA] OF 378-497</scope>
</reference>